<sequence>MGSESLETLQVILSGGEFMLHTSVWLVPGSLLSSHPVFTFKVKQENNGPTFWRRKVSRTLNESSLRSQQESSTPFKDPTSHPSDLKELSPAGQGTSRPLPTLSSCQSMAATDMPVCSLSLASSTNEPQELPDPRDAPREGSFRLDGNQSEFGLGNSLPASPLHSCRNLEKEESELHLYIISATSSIFLHLKSSWNNYIIRATLLQDPLCASEHNDVIGKPKPYRSEEKIKHFCQLKSELFLKDNTLRKILCLITELRVAAQRNFILKRLFWKTSELFYFLVNKLHEYLPESRDKHALQNKSQRADELMACIEIIQTLGLMFRETEIESSRLNTLAAKKGTLFNLLVILISKPKVPKSCSKSDAQPVADPTSAEVFFDSQLQKLTLEYTDTATALLYEILLIFQQGNLGLGSTKFAISWMMSFLQSCPPIMAFVARIVEGVVRGLSASFQLLTPCQAVLLYQQFYILRSCLQHSKALAEYIRNDHREEFRYFIHMPALEQRLPGCYPITEPTTQLCHEVLQLIEQKQCAKC</sequence>
<organism>
    <name type="scientific">Mus musculus</name>
    <name type="common">Mouse</name>
    <dbReference type="NCBI Taxonomy" id="10090"/>
    <lineage>
        <taxon>Eukaryota</taxon>
        <taxon>Metazoa</taxon>
        <taxon>Chordata</taxon>
        <taxon>Craniata</taxon>
        <taxon>Vertebrata</taxon>
        <taxon>Euteleostomi</taxon>
        <taxon>Mammalia</taxon>
        <taxon>Eutheria</taxon>
        <taxon>Euarchontoglires</taxon>
        <taxon>Glires</taxon>
        <taxon>Rodentia</taxon>
        <taxon>Myomorpha</taxon>
        <taxon>Muroidea</taxon>
        <taxon>Muridae</taxon>
        <taxon>Murinae</taxon>
        <taxon>Mus</taxon>
        <taxon>Mus</taxon>
    </lineage>
</organism>
<dbReference type="EMBL" id="AK033441">
    <property type="protein sequence ID" value="BAC28289.1"/>
    <property type="molecule type" value="mRNA"/>
</dbReference>
<dbReference type="iPTMnet" id="Q8CCC3"/>
<dbReference type="PhosphoSitePlus" id="Q8CCC3"/>
<dbReference type="PaxDb" id="10090-ENSMUSP00000113963"/>
<dbReference type="UCSC" id="uc007hfw.1">
    <property type="organism name" value="mouse"/>
</dbReference>
<dbReference type="AGR" id="MGI:2442001"/>
<dbReference type="MGI" id="MGI:2442001">
    <property type="gene designation" value="D930020B18Rik"/>
</dbReference>
<dbReference type="eggNOG" id="ENOG502QVPD">
    <property type="taxonomic scope" value="Eukaryota"/>
</dbReference>
<dbReference type="InParanoid" id="Q8CCC3"/>
<dbReference type="PhylomeDB" id="Q8CCC3"/>
<dbReference type="PRO" id="PR:Q8CCC3"/>
<dbReference type="Proteomes" id="UP000000589">
    <property type="component" value="Unplaced"/>
</dbReference>
<dbReference type="RNAct" id="Q8CCC3">
    <property type="molecule type" value="protein"/>
</dbReference>
<dbReference type="InterPro" id="IPR027878">
    <property type="entry name" value="DUF4551"/>
</dbReference>
<dbReference type="PANTHER" id="PTHR35354">
    <property type="entry name" value="RGD1561648"/>
    <property type="match status" value="1"/>
</dbReference>
<dbReference type="PANTHER" id="PTHR35354:SF1">
    <property type="entry name" value="RGD1561648"/>
    <property type="match status" value="1"/>
</dbReference>
<dbReference type="Pfam" id="PF15087">
    <property type="entry name" value="DUF4551"/>
    <property type="match status" value="1"/>
</dbReference>
<feature type="chain" id="PRO_0000320928" description="Uncharacterized protein C12orf56 homolog">
    <location>
        <begin position="1"/>
        <end position="530"/>
    </location>
</feature>
<feature type="region of interest" description="Disordered" evidence="1">
    <location>
        <begin position="60"/>
        <end position="103"/>
    </location>
</feature>
<feature type="region of interest" description="Disordered" evidence="1">
    <location>
        <begin position="121"/>
        <end position="155"/>
    </location>
</feature>
<feature type="compositionally biased region" description="Polar residues" evidence="1">
    <location>
        <begin position="60"/>
        <end position="74"/>
    </location>
</feature>
<feature type="compositionally biased region" description="Polar residues" evidence="1">
    <location>
        <begin position="92"/>
        <end position="103"/>
    </location>
</feature>
<feature type="compositionally biased region" description="Basic and acidic residues" evidence="1">
    <location>
        <begin position="131"/>
        <end position="142"/>
    </location>
</feature>
<proteinExistence type="evidence at transcript level"/>
<keyword id="KW-1185">Reference proteome</keyword>
<evidence type="ECO:0000256" key="1">
    <source>
        <dbReference type="SAM" id="MobiDB-lite"/>
    </source>
</evidence>
<accession>Q8CCC3</accession>
<reference key="1">
    <citation type="journal article" date="2005" name="Science">
        <title>The transcriptional landscape of the mammalian genome.</title>
        <authorList>
            <person name="Carninci P."/>
            <person name="Kasukawa T."/>
            <person name="Katayama S."/>
            <person name="Gough J."/>
            <person name="Frith M.C."/>
            <person name="Maeda N."/>
            <person name="Oyama R."/>
            <person name="Ravasi T."/>
            <person name="Lenhard B."/>
            <person name="Wells C."/>
            <person name="Kodzius R."/>
            <person name="Shimokawa K."/>
            <person name="Bajic V.B."/>
            <person name="Brenner S.E."/>
            <person name="Batalov S."/>
            <person name="Forrest A.R."/>
            <person name="Zavolan M."/>
            <person name="Davis M.J."/>
            <person name="Wilming L.G."/>
            <person name="Aidinis V."/>
            <person name="Allen J.E."/>
            <person name="Ambesi-Impiombato A."/>
            <person name="Apweiler R."/>
            <person name="Aturaliya R.N."/>
            <person name="Bailey T.L."/>
            <person name="Bansal M."/>
            <person name="Baxter L."/>
            <person name="Beisel K.W."/>
            <person name="Bersano T."/>
            <person name="Bono H."/>
            <person name="Chalk A.M."/>
            <person name="Chiu K.P."/>
            <person name="Choudhary V."/>
            <person name="Christoffels A."/>
            <person name="Clutterbuck D.R."/>
            <person name="Crowe M.L."/>
            <person name="Dalla E."/>
            <person name="Dalrymple B.P."/>
            <person name="de Bono B."/>
            <person name="Della Gatta G."/>
            <person name="di Bernardo D."/>
            <person name="Down T."/>
            <person name="Engstrom P."/>
            <person name="Fagiolini M."/>
            <person name="Faulkner G."/>
            <person name="Fletcher C.F."/>
            <person name="Fukushima T."/>
            <person name="Furuno M."/>
            <person name="Futaki S."/>
            <person name="Gariboldi M."/>
            <person name="Georgii-Hemming P."/>
            <person name="Gingeras T.R."/>
            <person name="Gojobori T."/>
            <person name="Green R.E."/>
            <person name="Gustincich S."/>
            <person name="Harbers M."/>
            <person name="Hayashi Y."/>
            <person name="Hensch T.K."/>
            <person name="Hirokawa N."/>
            <person name="Hill D."/>
            <person name="Huminiecki L."/>
            <person name="Iacono M."/>
            <person name="Ikeo K."/>
            <person name="Iwama A."/>
            <person name="Ishikawa T."/>
            <person name="Jakt M."/>
            <person name="Kanapin A."/>
            <person name="Katoh M."/>
            <person name="Kawasawa Y."/>
            <person name="Kelso J."/>
            <person name="Kitamura H."/>
            <person name="Kitano H."/>
            <person name="Kollias G."/>
            <person name="Krishnan S.P."/>
            <person name="Kruger A."/>
            <person name="Kummerfeld S.K."/>
            <person name="Kurochkin I.V."/>
            <person name="Lareau L.F."/>
            <person name="Lazarevic D."/>
            <person name="Lipovich L."/>
            <person name="Liu J."/>
            <person name="Liuni S."/>
            <person name="McWilliam S."/>
            <person name="Madan Babu M."/>
            <person name="Madera M."/>
            <person name="Marchionni L."/>
            <person name="Matsuda H."/>
            <person name="Matsuzawa S."/>
            <person name="Miki H."/>
            <person name="Mignone F."/>
            <person name="Miyake S."/>
            <person name="Morris K."/>
            <person name="Mottagui-Tabar S."/>
            <person name="Mulder N."/>
            <person name="Nakano N."/>
            <person name="Nakauchi H."/>
            <person name="Ng P."/>
            <person name="Nilsson R."/>
            <person name="Nishiguchi S."/>
            <person name="Nishikawa S."/>
            <person name="Nori F."/>
            <person name="Ohara O."/>
            <person name="Okazaki Y."/>
            <person name="Orlando V."/>
            <person name="Pang K.C."/>
            <person name="Pavan W.J."/>
            <person name="Pavesi G."/>
            <person name="Pesole G."/>
            <person name="Petrovsky N."/>
            <person name="Piazza S."/>
            <person name="Reed J."/>
            <person name="Reid J.F."/>
            <person name="Ring B.Z."/>
            <person name="Ringwald M."/>
            <person name="Rost B."/>
            <person name="Ruan Y."/>
            <person name="Salzberg S.L."/>
            <person name="Sandelin A."/>
            <person name="Schneider C."/>
            <person name="Schoenbach C."/>
            <person name="Sekiguchi K."/>
            <person name="Semple C.A."/>
            <person name="Seno S."/>
            <person name="Sessa L."/>
            <person name="Sheng Y."/>
            <person name="Shibata Y."/>
            <person name="Shimada H."/>
            <person name="Shimada K."/>
            <person name="Silva D."/>
            <person name="Sinclair B."/>
            <person name="Sperling S."/>
            <person name="Stupka E."/>
            <person name="Sugiura K."/>
            <person name="Sultana R."/>
            <person name="Takenaka Y."/>
            <person name="Taki K."/>
            <person name="Tammoja K."/>
            <person name="Tan S.L."/>
            <person name="Tang S."/>
            <person name="Taylor M.S."/>
            <person name="Tegner J."/>
            <person name="Teichmann S.A."/>
            <person name="Ueda H.R."/>
            <person name="van Nimwegen E."/>
            <person name="Verardo R."/>
            <person name="Wei C.L."/>
            <person name="Yagi K."/>
            <person name="Yamanishi H."/>
            <person name="Zabarovsky E."/>
            <person name="Zhu S."/>
            <person name="Zimmer A."/>
            <person name="Hide W."/>
            <person name="Bult C."/>
            <person name="Grimmond S.M."/>
            <person name="Teasdale R.D."/>
            <person name="Liu E.T."/>
            <person name="Brusic V."/>
            <person name="Quackenbush J."/>
            <person name="Wahlestedt C."/>
            <person name="Mattick J.S."/>
            <person name="Hume D.A."/>
            <person name="Kai C."/>
            <person name="Sasaki D."/>
            <person name="Tomaru Y."/>
            <person name="Fukuda S."/>
            <person name="Kanamori-Katayama M."/>
            <person name="Suzuki M."/>
            <person name="Aoki J."/>
            <person name="Arakawa T."/>
            <person name="Iida J."/>
            <person name="Imamura K."/>
            <person name="Itoh M."/>
            <person name="Kato T."/>
            <person name="Kawaji H."/>
            <person name="Kawagashira N."/>
            <person name="Kawashima T."/>
            <person name="Kojima M."/>
            <person name="Kondo S."/>
            <person name="Konno H."/>
            <person name="Nakano K."/>
            <person name="Ninomiya N."/>
            <person name="Nishio T."/>
            <person name="Okada M."/>
            <person name="Plessy C."/>
            <person name="Shibata K."/>
            <person name="Shiraki T."/>
            <person name="Suzuki S."/>
            <person name="Tagami M."/>
            <person name="Waki K."/>
            <person name="Watahiki A."/>
            <person name="Okamura-Oho Y."/>
            <person name="Suzuki H."/>
            <person name="Kawai J."/>
            <person name="Hayashizaki Y."/>
        </authorList>
    </citation>
    <scope>NUCLEOTIDE SEQUENCE [LARGE SCALE MRNA]</scope>
    <source>
        <strain>C57BL/6J</strain>
        <tissue>Colon</tissue>
    </source>
</reference>
<protein>
    <recommendedName>
        <fullName>Uncharacterized protein C12orf56 homolog</fullName>
    </recommendedName>
</protein>
<name>CL056_MOUSE</name>